<feature type="chain" id="PRO_0000343275" description="NAD(P)H-quinone oxidoreductase chain 4, chloroplastic">
    <location>
        <begin position="1"/>
        <end position="500"/>
    </location>
</feature>
<feature type="transmembrane region" description="Helical" evidence="1">
    <location>
        <begin position="4"/>
        <end position="24"/>
    </location>
</feature>
<feature type="transmembrane region" description="Helical" evidence="1">
    <location>
        <begin position="37"/>
        <end position="57"/>
    </location>
</feature>
<feature type="transmembrane region" description="Helical" evidence="1">
    <location>
        <begin position="87"/>
        <end position="107"/>
    </location>
</feature>
<feature type="transmembrane region" description="Helical" evidence="1">
    <location>
        <begin position="113"/>
        <end position="130"/>
    </location>
</feature>
<feature type="transmembrane region" description="Helical" evidence="1">
    <location>
        <begin position="134"/>
        <end position="154"/>
    </location>
</feature>
<feature type="transmembrane region" description="Helical" evidence="1">
    <location>
        <begin position="167"/>
        <end position="187"/>
    </location>
</feature>
<feature type="transmembrane region" description="Helical" evidence="1">
    <location>
        <begin position="207"/>
        <end position="227"/>
    </location>
</feature>
<feature type="transmembrane region" description="Helical" evidence="1">
    <location>
        <begin position="242"/>
        <end position="262"/>
    </location>
</feature>
<feature type="transmembrane region" description="Helical" evidence="1">
    <location>
        <begin position="272"/>
        <end position="292"/>
    </location>
</feature>
<feature type="transmembrane region" description="Helical" evidence="1">
    <location>
        <begin position="305"/>
        <end position="325"/>
    </location>
</feature>
<feature type="transmembrane region" description="Helical" evidence="1">
    <location>
        <begin position="330"/>
        <end position="350"/>
    </location>
</feature>
<feature type="transmembrane region" description="Helical" evidence="1">
    <location>
        <begin position="386"/>
        <end position="406"/>
    </location>
</feature>
<feature type="transmembrane region" description="Helical" evidence="1">
    <location>
        <begin position="411"/>
        <end position="431"/>
    </location>
</feature>
<feature type="transmembrane region" description="Helical" evidence="1">
    <location>
        <begin position="462"/>
        <end position="482"/>
    </location>
</feature>
<gene>
    <name evidence="1" type="primary">ndhD</name>
</gene>
<sequence>MNYFPWLTIIVVLPISAGSLIFFLPHRGNKVIRWYTICICVLELLLTTYAFCYHFQLDDPLVQLTEDYKWINFFDFYWRLGIDGLSIGPILLTGFITTLATLAAWPVTRDSRLFHFLMLAMYSGQIGSFSSRDLLLFFLMWELELIPVYLLLSMWGGKKRLYSATKFILYTAGGSIFLLIGVLGIGLYGSTEPTLNFETLTNQSYPIALEIIFYIGFLIAFAVKSPIIPLHTWLPDTHGEAHYSTCMLLAGILLKMGAYGLVRINMELLPHAHSLFSPWLVVVGTMQIIYAASTSSGQRNLKKRIAYSSVSHMGFIIIGIGSITDPGLNGAILQIVSHGFIGAALFFLAGTSYDRIRLVYLDEMGGMAISMPKIFTMFSILSMASLALPGMSGFVAELIVFFGIITSQKYFLMAKILITFVMAIGMILTPIYSLSMSRQMFYGYKLINAQNFSFFDSGPRELFVSISILLPVIGIGIYPDFLLSLSSDKVEAILSNYFNR</sequence>
<name>NU4C_CARPA</name>
<organism>
    <name type="scientific">Carica papaya</name>
    <name type="common">Papaya</name>
    <dbReference type="NCBI Taxonomy" id="3649"/>
    <lineage>
        <taxon>Eukaryota</taxon>
        <taxon>Viridiplantae</taxon>
        <taxon>Streptophyta</taxon>
        <taxon>Embryophyta</taxon>
        <taxon>Tracheophyta</taxon>
        <taxon>Spermatophyta</taxon>
        <taxon>Magnoliopsida</taxon>
        <taxon>eudicotyledons</taxon>
        <taxon>Gunneridae</taxon>
        <taxon>Pentapetalae</taxon>
        <taxon>rosids</taxon>
        <taxon>malvids</taxon>
        <taxon>Brassicales</taxon>
        <taxon>Caricaceae</taxon>
        <taxon>Carica</taxon>
    </lineage>
</organism>
<dbReference type="EC" id="7.1.1.-" evidence="1"/>
<dbReference type="EMBL" id="EU431223">
    <property type="protein sequence ID" value="ABY86837.1"/>
    <property type="molecule type" value="Genomic_DNA"/>
</dbReference>
<dbReference type="RefSeq" id="YP_001671732.1">
    <property type="nucleotide sequence ID" value="NC_010323.1"/>
</dbReference>
<dbReference type="SMR" id="B1A984"/>
<dbReference type="GeneID" id="5878414"/>
<dbReference type="KEGG" id="cpap:5878414"/>
<dbReference type="OrthoDB" id="564260at2759"/>
<dbReference type="GO" id="GO:0009535">
    <property type="term" value="C:chloroplast thylakoid membrane"/>
    <property type="evidence" value="ECO:0007669"/>
    <property type="project" value="UniProtKB-SubCell"/>
</dbReference>
<dbReference type="GO" id="GO:0008137">
    <property type="term" value="F:NADH dehydrogenase (ubiquinone) activity"/>
    <property type="evidence" value="ECO:0007669"/>
    <property type="project" value="InterPro"/>
</dbReference>
<dbReference type="GO" id="GO:0048039">
    <property type="term" value="F:ubiquinone binding"/>
    <property type="evidence" value="ECO:0007669"/>
    <property type="project" value="TreeGrafter"/>
</dbReference>
<dbReference type="GO" id="GO:0042773">
    <property type="term" value="P:ATP synthesis coupled electron transport"/>
    <property type="evidence" value="ECO:0007669"/>
    <property type="project" value="InterPro"/>
</dbReference>
<dbReference type="GO" id="GO:0015990">
    <property type="term" value="P:electron transport coupled proton transport"/>
    <property type="evidence" value="ECO:0007669"/>
    <property type="project" value="TreeGrafter"/>
</dbReference>
<dbReference type="HAMAP" id="MF_00491">
    <property type="entry name" value="NDH1_NuoM"/>
    <property type="match status" value="1"/>
</dbReference>
<dbReference type="InterPro" id="IPR022997">
    <property type="entry name" value="NADH_Q_OxRdtase_chain4"/>
</dbReference>
<dbReference type="InterPro" id="IPR010227">
    <property type="entry name" value="NADH_Q_OxRdtase_chainM/4"/>
</dbReference>
<dbReference type="InterPro" id="IPR003918">
    <property type="entry name" value="NADH_UbQ_OxRdtase"/>
</dbReference>
<dbReference type="InterPro" id="IPR001750">
    <property type="entry name" value="ND/Mrp_TM"/>
</dbReference>
<dbReference type="NCBIfam" id="TIGR01972">
    <property type="entry name" value="NDH_I_M"/>
    <property type="match status" value="1"/>
</dbReference>
<dbReference type="PANTHER" id="PTHR43507:SF21">
    <property type="entry name" value="NAD(P)H-QUINONE OXIDOREDUCTASE CHAIN 4, CHLOROPLASTIC"/>
    <property type="match status" value="1"/>
</dbReference>
<dbReference type="PANTHER" id="PTHR43507">
    <property type="entry name" value="NADH-UBIQUINONE OXIDOREDUCTASE CHAIN 4"/>
    <property type="match status" value="1"/>
</dbReference>
<dbReference type="Pfam" id="PF00361">
    <property type="entry name" value="Proton_antipo_M"/>
    <property type="match status" value="1"/>
</dbReference>
<dbReference type="PRINTS" id="PR01437">
    <property type="entry name" value="NUOXDRDTASE4"/>
</dbReference>
<protein>
    <recommendedName>
        <fullName evidence="1">NAD(P)H-quinone oxidoreductase chain 4, chloroplastic</fullName>
        <ecNumber evidence="1">7.1.1.-</ecNumber>
    </recommendedName>
    <alternativeName>
        <fullName evidence="1">NAD(P)H dehydrogenase, chain 4</fullName>
    </alternativeName>
    <alternativeName>
        <fullName evidence="1">NADH-plastoquinone oxidoreductase chain 4</fullName>
    </alternativeName>
</protein>
<keyword id="KW-0150">Chloroplast</keyword>
<keyword id="KW-0472">Membrane</keyword>
<keyword id="KW-0520">NAD</keyword>
<keyword id="KW-0521">NADP</keyword>
<keyword id="KW-0934">Plastid</keyword>
<keyword id="KW-0618">Plastoquinone</keyword>
<keyword id="KW-0874">Quinone</keyword>
<keyword id="KW-0793">Thylakoid</keyword>
<keyword id="KW-1278">Translocase</keyword>
<keyword id="KW-0812">Transmembrane</keyword>
<keyword id="KW-1133">Transmembrane helix</keyword>
<proteinExistence type="inferred from homology"/>
<accession>B1A984</accession>
<evidence type="ECO:0000255" key="1">
    <source>
        <dbReference type="HAMAP-Rule" id="MF_00491"/>
    </source>
</evidence>
<reference key="1">
    <citation type="journal article" date="2008" name="Nature">
        <title>The draft genome of the transgenic tropical fruit tree papaya (Carica papaya Linnaeus).</title>
        <authorList>
            <person name="Ming R."/>
            <person name="Hou S."/>
            <person name="Feng Y."/>
            <person name="Yu Q."/>
            <person name="Dionne-Laporte A."/>
            <person name="Saw J.H."/>
            <person name="Senin P."/>
            <person name="Wang W."/>
            <person name="Ly B.V."/>
            <person name="Lewis K.L."/>
            <person name="Salzberg S.L."/>
            <person name="Feng L."/>
            <person name="Jones M.R."/>
            <person name="Skelton R.L."/>
            <person name="Murray J.E."/>
            <person name="Chen C."/>
            <person name="Qian W."/>
            <person name="Shen J."/>
            <person name="Du P."/>
            <person name="Eustice M."/>
            <person name="Tong E."/>
            <person name="Tang H."/>
            <person name="Lyons E."/>
            <person name="Paull R.E."/>
            <person name="Michael T.P."/>
            <person name="Wall K."/>
            <person name="Rice D.W."/>
            <person name="Albert H."/>
            <person name="Wang M.L."/>
            <person name="Zhu Y.J."/>
            <person name="Schatz M."/>
            <person name="Nagarajan N."/>
            <person name="Acob R.A."/>
            <person name="Guan P."/>
            <person name="Blas A."/>
            <person name="Wai C.M."/>
            <person name="Ackerman C.M."/>
            <person name="Ren Y."/>
            <person name="Liu C."/>
            <person name="Wang J."/>
            <person name="Wang J."/>
            <person name="Na J.K."/>
            <person name="Shakirov E.V."/>
            <person name="Haas B."/>
            <person name="Thimmapuram J."/>
            <person name="Nelson D."/>
            <person name="Wang X."/>
            <person name="Bowers J.E."/>
            <person name="Gschwend A.R."/>
            <person name="Delcher A.L."/>
            <person name="Singh R."/>
            <person name="Suzuki J.Y."/>
            <person name="Tripathi S."/>
            <person name="Neupane K."/>
            <person name="Wei H."/>
            <person name="Irikura B."/>
            <person name="Paidi M."/>
            <person name="Jiang N."/>
            <person name="Zhang W."/>
            <person name="Presting G."/>
            <person name="Windsor A."/>
            <person name="Navajas-Perez R."/>
            <person name="Torres M.J."/>
            <person name="Feltus F.A."/>
            <person name="Porter B."/>
            <person name="Li Y."/>
            <person name="Burroughs A.M."/>
            <person name="Luo M.C."/>
            <person name="Liu L."/>
            <person name="Christopher D.A."/>
            <person name="Mount S.M."/>
            <person name="Moore P.H."/>
            <person name="Sugimura T."/>
            <person name="Jiang J."/>
            <person name="Schuler M.A."/>
            <person name="Friedman V."/>
            <person name="Mitchell-Olds T."/>
            <person name="Shippen D.E."/>
            <person name="dePamphilis C.W."/>
            <person name="Palmer J.D."/>
            <person name="Freeling M."/>
            <person name="Paterson A.H."/>
            <person name="Gonsalves D."/>
            <person name="Wang L."/>
            <person name="Alam M."/>
        </authorList>
    </citation>
    <scope>NUCLEOTIDE SEQUENCE [LARGE SCALE GENOMIC DNA]</scope>
    <source>
        <strain>cv. SunUp</strain>
    </source>
</reference>
<geneLocation type="chloroplast"/>
<comment type="catalytic activity">
    <reaction evidence="1">
        <text>a plastoquinone + NADH + (n+1) H(+)(in) = a plastoquinol + NAD(+) + n H(+)(out)</text>
        <dbReference type="Rhea" id="RHEA:42608"/>
        <dbReference type="Rhea" id="RHEA-COMP:9561"/>
        <dbReference type="Rhea" id="RHEA-COMP:9562"/>
        <dbReference type="ChEBI" id="CHEBI:15378"/>
        <dbReference type="ChEBI" id="CHEBI:17757"/>
        <dbReference type="ChEBI" id="CHEBI:57540"/>
        <dbReference type="ChEBI" id="CHEBI:57945"/>
        <dbReference type="ChEBI" id="CHEBI:62192"/>
    </reaction>
</comment>
<comment type="catalytic activity">
    <reaction evidence="1">
        <text>a plastoquinone + NADPH + (n+1) H(+)(in) = a plastoquinol + NADP(+) + n H(+)(out)</text>
        <dbReference type="Rhea" id="RHEA:42612"/>
        <dbReference type="Rhea" id="RHEA-COMP:9561"/>
        <dbReference type="Rhea" id="RHEA-COMP:9562"/>
        <dbReference type="ChEBI" id="CHEBI:15378"/>
        <dbReference type="ChEBI" id="CHEBI:17757"/>
        <dbReference type="ChEBI" id="CHEBI:57783"/>
        <dbReference type="ChEBI" id="CHEBI:58349"/>
        <dbReference type="ChEBI" id="CHEBI:62192"/>
    </reaction>
</comment>
<comment type="subcellular location">
    <subcellularLocation>
        <location evidence="1">Plastid</location>
        <location evidence="1">Chloroplast thylakoid membrane</location>
        <topology evidence="1">Multi-pass membrane protein</topology>
    </subcellularLocation>
</comment>
<comment type="similarity">
    <text evidence="1">Belongs to the complex I subunit 4 family.</text>
</comment>